<reference key="1">
    <citation type="journal article" date="2006" name="PLoS Genet.">
        <title>Secrets of soil survival revealed by the genome sequence of Arthrobacter aurescens TC1.</title>
        <authorList>
            <person name="Mongodin E.F."/>
            <person name="Shapir N."/>
            <person name="Daugherty S.C."/>
            <person name="DeBoy R.T."/>
            <person name="Emerson J.B."/>
            <person name="Shvartzbeyn A."/>
            <person name="Radune D."/>
            <person name="Vamathevan J."/>
            <person name="Riggs F."/>
            <person name="Grinberg V."/>
            <person name="Khouri H.M."/>
            <person name="Wackett L.P."/>
            <person name="Nelson K.E."/>
            <person name="Sadowsky M.J."/>
        </authorList>
    </citation>
    <scope>NUCLEOTIDE SEQUENCE [LARGE SCALE GENOMIC DNA]</scope>
    <source>
        <strain>TC1</strain>
    </source>
</reference>
<feature type="chain" id="PRO_0000301551" description="Aspartate carbamoyltransferase catalytic subunit">
    <location>
        <begin position="1"/>
        <end position="335"/>
    </location>
</feature>
<feature type="binding site" evidence="1">
    <location>
        <position position="54"/>
    </location>
    <ligand>
        <name>carbamoyl phosphate</name>
        <dbReference type="ChEBI" id="CHEBI:58228"/>
    </ligand>
</feature>
<feature type="binding site" evidence="1">
    <location>
        <position position="55"/>
    </location>
    <ligand>
        <name>carbamoyl phosphate</name>
        <dbReference type="ChEBI" id="CHEBI:58228"/>
    </ligand>
</feature>
<feature type="binding site" evidence="1">
    <location>
        <position position="82"/>
    </location>
    <ligand>
        <name>L-aspartate</name>
        <dbReference type="ChEBI" id="CHEBI:29991"/>
    </ligand>
</feature>
<feature type="binding site" evidence="1">
    <location>
        <position position="104"/>
    </location>
    <ligand>
        <name>carbamoyl phosphate</name>
        <dbReference type="ChEBI" id="CHEBI:58228"/>
    </ligand>
</feature>
<feature type="binding site" evidence="1">
    <location>
        <position position="134"/>
    </location>
    <ligand>
        <name>carbamoyl phosphate</name>
        <dbReference type="ChEBI" id="CHEBI:58228"/>
    </ligand>
</feature>
<feature type="binding site" evidence="1">
    <location>
        <position position="137"/>
    </location>
    <ligand>
        <name>carbamoyl phosphate</name>
        <dbReference type="ChEBI" id="CHEBI:58228"/>
    </ligand>
</feature>
<feature type="binding site" evidence="1">
    <location>
        <position position="177"/>
    </location>
    <ligand>
        <name>L-aspartate</name>
        <dbReference type="ChEBI" id="CHEBI:29991"/>
    </ligand>
</feature>
<feature type="binding site" evidence="1">
    <location>
        <position position="232"/>
    </location>
    <ligand>
        <name>L-aspartate</name>
        <dbReference type="ChEBI" id="CHEBI:29991"/>
    </ligand>
</feature>
<feature type="binding site" evidence="1">
    <location>
        <position position="277"/>
    </location>
    <ligand>
        <name>carbamoyl phosphate</name>
        <dbReference type="ChEBI" id="CHEBI:58228"/>
    </ligand>
</feature>
<feature type="binding site" evidence="1">
    <location>
        <position position="278"/>
    </location>
    <ligand>
        <name>carbamoyl phosphate</name>
        <dbReference type="ChEBI" id="CHEBI:58228"/>
    </ligand>
</feature>
<organism>
    <name type="scientific">Paenarthrobacter aurescens (strain TC1)</name>
    <dbReference type="NCBI Taxonomy" id="290340"/>
    <lineage>
        <taxon>Bacteria</taxon>
        <taxon>Bacillati</taxon>
        <taxon>Actinomycetota</taxon>
        <taxon>Actinomycetes</taxon>
        <taxon>Micrococcales</taxon>
        <taxon>Micrococcaceae</taxon>
        <taxon>Paenarthrobacter</taxon>
    </lineage>
</organism>
<name>PYRB_PAEAT</name>
<accession>A1R6Z7</accession>
<sequence length="335" mass="36455">MKHLLSTENLSLFDAVRVLDTAEEMSAVGEREVKKLPALRGRTVVNLFFEDSTRTRISFEAAAKRLSADVINFAAKGSSVSKGESLKDTAQTLAAMGADAVVIRHWASGAPHRLAATDWIDAAVINAGDGTHEHPTQALLDAFTMRRHWSQVNGTESTGADLKGMRVAIAGDVLHSRVARSNVWLLKTLGAEVTLVAPPTLLPIGVEHWPCKVSYNLDETLEAGIDAMMMLRVQGERMNASFFPSTREYSRRWGFDDARLRMLDDLGMKDTIIMHPGPMNRGLEISSAAADSPRSTVLAQVRNGVSVRMAALYLLLSGDSREAAPNVSQSSKETN</sequence>
<protein>
    <recommendedName>
        <fullName evidence="1">Aspartate carbamoyltransferase catalytic subunit</fullName>
        <ecNumber evidence="1">2.1.3.2</ecNumber>
    </recommendedName>
    <alternativeName>
        <fullName evidence="1">Aspartate transcarbamylase</fullName>
        <shortName evidence="1">ATCase</shortName>
    </alternativeName>
</protein>
<dbReference type="EC" id="2.1.3.2" evidence="1"/>
<dbReference type="EMBL" id="CP000474">
    <property type="protein sequence ID" value="ABM07590.1"/>
    <property type="molecule type" value="Genomic_DNA"/>
</dbReference>
<dbReference type="RefSeq" id="WP_011774953.1">
    <property type="nucleotide sequence ID" value="NC_008711.1"/>
</dbReference>
<dbReference type="SMR" id="A1R6Z7"/>
<dbReference type="STRING" id="290340.AAur_2269"/>
<dbReference type="KEGG" id="aau:AAur_2269"/>
<dbReference type="eggNOG" id="COG0540">
    <property type="taxonomic scope" value="Bacteria"/>
</dbReference>
<dbReference type="HOGENOM" id="CLU_043846_2_0_11"/>
<dbReference type="OrthoDB" id="9774690at2"/>
<dbReference type="UniPathway" id="UPA00070">
    <property type="reaction ID" value="UER00116"/>
</dbReference>
<dbReference type="Proteomes" id="UP000000637">
    <property type="component" value="Chromosome"/>
</dbReference>
<dbReference type="GO" id="GO:0005829">
    <property type="term" value="C:cytosol"/>
    <property type="evidence" value="ECO:0007669"/>
    <property type="project" value="TreeGrafter"/>
</dbReference>
<dbReference type="GO" id="GO:0016597">
    <property type="term" value="F:amino acid binding"/>
    <property type="evidence" value="ECO:0007669"/>
    <property type="project" value="InterPro"/>
</dbReference>
<dbReference type="GO" id="GO:0004070">
    <property type="term" value="F:aspartate carbamoyltransferase activity"/>
    <property type="evidence" value="ECO:0007669"/>
    <property type="project" value="UniProtKB-UniRule"/>
</dbReference>
<dbReference type="GO" id="GO:0006207">
    <property type="term" value="P:'de novo' pyrimidine nucleobase biosynthetic process"/>
    <property type="evidence" value="ECO:0007669"/>
    <property type="project" value="InterPro"/>
</dbReference>
<dbReference type="GO" id="GO:0044205">
    <property type="term" value="P:'de novo' UMP biosynthetic process"/>
    <property type="evidence" value="ECO:0007669"/>
    <property type="project" value="UniProtKB-UniRule"/>
</dbReference>
<dbReference type="GO" id="GO:0006520">
    <property type="term" value="P:amino acid metabolic process"/>
    <property type="evidence" value="ECO:0007669"/>
    <property type="project" value="InterPro"/>
</dbReference>
<dbReference type="FunFam" id="3.40.50.1370:FF:000007">
    <property type="entry name" value="Aspartate carbamoyltransferase"/>
    <property type="match status" value="1"/>
</dbReference>
<dbReference type="FunFam" id="3.40.50.1370:FF:000012">
    <property type="entry name" value="Aspartate carbamoyltransferase"/>
    <property type="match status" value="1"/>
</dbReference>
<dbReference type="Gene3D" id="3.40.50.1370">
    <property type="entry name" value="Aspartate/ornithine carbamoyltransferase"/>
    <property type="match status" value="2"/>
</dbReference>
<dbReference type="HAMAP" id="MF_00001">
    <property type="entry name" value="Asp_carb_tr"/>
    <property type="match status" value="1"/>
</dbReference>
<dbReference type="InterPro" id="IPR006132">
    <property type="entry name" value="Asp/Orn_carbamoyltranf_P-bd"/>
</dbReference>
<dbReference type="InterPro" id="IPR006130">
    <property type="entry name" value="Asp/Orn_carbamoylTrfase"/>
</dbReference>
<dbReference type="InterPro" id="IPR036901">
    <property type="entry name" value="Asp/Orn_carbamoylTrfase_sf"/>
</dbReference>
<dbReference type="InterPro" id="IPR002082">
    <property type="entry name" value="Asp_carbamoyltransf"/>
</dbReference>
<dbReference type="InterPro" id="IPR006131">
    <property type="entry name" value="Asp_carbamoyltransf_Asp/Orn-bd"/>
</dbReference>
<dbReference type="NCBIfam" id="TIGR00670">
    <property type="entry name" value="asp_carb_tr"/>
    <property type="match status" value="1"/>
</dbReference>
<dbReference type="NCBIfam" id="NF002032">
    <property type="entry name" value="PRK00856.1"/>
    <property type="match status" value="1"/>
</dbReference>
<dbReference type="PANTHER" id="PTHR45753:SF6">
    <property type="entry name" value="ASPARTATE CARBAMOYLTRANSFERASE"/>
    <property type="match status" value="1"/>
</dbReference>
<dbReference type="PANTHER" id="PTHR45753">
    <property type="entry name" value="ORNITHINE CARBAMOYLTRANSFERASE, MITOCHONDRIAL"/>
    <property type="match status" value="1"/>
</dbReference>
<dbReference type="Pfam" id="PF00185">
    <property type="entry name" value="OTCace"/>
    <property type="match status" value="1"/>
</dbReference>
<dbReference type="Pfam" id="PF02729">
    <property type="entry name" value="OTCace_N"/>
    <property type="match status" value="1"/>
</dbReference>
<dbReference type="PRINTS" id="PR00100">
    <property type="entry name" value="AOTCASE"/>
</dbReference>
<dbReference type="PRINTS" id="PR00101">
    <property type="entry name" value="ATCASE"/>
</dbReference>
<dbReference type="SUPFAM" id="SSF53671">
    <property type="entry name" value="Aspartate/ornithine carbamoyltransferase"/>
    <property type="match status" value="1"/>
</dbReference>
<dbReference type="PROSITE" id="PS00097">
    <property type="entry name" value="CARBAMOYLTRANSFERASE"/>
    <property type="match status" value="1"/>
</dbReference>
<evidence type="ECO:0000255" key="1">
    <source>
        <dbReference type="HAMAP-Rule" id="MF_00001"/>
    </source>
</evidence>
<gene>
    <name evidence="1" type="primary">pyrB</name>
    <name type="ordered locus">AAur_2269</name>
</gene>
<proteinExistence type="inferred from homology"/>
<keyword id="KW-0665">Pyrimidine biosynthesis</keyword>
<keyword id="KW-0808">Transferase</keyword>
<comment type="function">
    <text evidence="1">Catalyzes the condensation of carbamoyl phosphate and aspartate to form carbamoyl aspartate and inorganic phosphate, the committed step in the de novo pyrimidine nucleotide biosynthesis pathway.</text>
</comment>
<comment type="catalytic activity">
    <reaction evidence="1">
        <text>carbamoyl phosphate + L-aspartate = N-carbamoyl-L-aspartate + phosphate + H(+)</text>
        <dbReference type="Rhea" id="RHEA:20013"/>
        <dbReference type="ChEBI" id="CHEBI:15378"/>
        <dbReference type="ChEBI" id="CHEBI:29991"/>
        <dbReference type="ChEBI" id="CHEBI:32814"/>
        <dbReference type="ChEBI" id="CHEBI:43474"/>
        <dbReference type="ChEBI" id="CHEBI:58228"/>
        <dbReference type="EC" id="2.1.3.2"/>
    </reaction>
</comment>
<comment type="pathway">
    <text evidence="1">Pyrimidine metabolism; UMP biosynthesis via de novo pathway; (S)-dihydroorotate from bicarbonate: step 2/3.</text>
</comment>
<comment type="subunit">
    <text evidence="1">Heterododecamer (2C3:3R2) of six catalytic PyrB chains organized as two trimers (C3), and six regulatory PyrI chains organized as three dimers (R2).</text>
</comment>
<comment type="similarity">
    <text evidence="1">Belongs to the aspartate/ornithine carbamoyltransferase superfamily. ATCase family.</text>
</comment>